<proteinExistence type="inferred from homology"/>
<name>HTPX_STRMU</name>
<protein>
    <recommendedName>
        <fullName evidence="1">Protease HtpX homolog</fullName>
        <ecNumber evidence="1">3.4.24.-</ecNumber>
    </recommendedName>
</protein>
<feature type="chain" id="PRO_0000138895" description="Protease HtpX homolog">
    <location>
        <begin position="1"/>
        <end position="299"/>
    </location>
</feature>
<feature type="transmembrane region" description="Helical" evidence="1">
    <location>
        <begin position="14"/>
        <end position="34"/>
    </location>
</feature>
<feature type="transmembrane region" description="Helical" evidence="1">
    <location>
        <begin position="39"/>
        <end position="59"/>
    </location>
</feature>
<feature type="transmembrane region" description="Helical" evidence="1">
    <location>
        <begin position="158"/>
        <end position="178"/>
    </location>
</feature>
<feature type="transmembrane region" description="Helical" evidence="1">
    <location>
        <begin position="198"/>
        <end position="218"/>
    </location>
</feature>
<feature type="active site" evidence="1">
    <location>
        <position position="144"/>
    </location>
</feature>
<feature type="binding site" evidence="1">
    <location>
        <position position="143"/>
    </location>
    <ligand>
        <name>Zn(2+)</name>
        <dbReference type="ChEBI" id="CHEBI:29105"/>
        <note>catalytic</note>
    </ligand>
</feature>
<feature type="binding site" evidence="1">
    <location>
        <position position="147"/>
    </location>
    <ligand>
        <name>Zn(2+)</name>
        <dbReference type="ChEBI" id="CHEBI:29105"/>
        <note>catalytic</note>
    </ligand>
</feature>
<feature type="binding site" evidence="1">
    <location>
        <position position="227"/>
    </location>
    <ligand>
        <name>Zn(2+)</name>
        <dbReference type="ChEBI" id="CHEBI:29105"/>
        <note>catalytic</note>
    </ligand>
</feature>
<dbReference type="EC" id="3.4.24.-" evidence="1"/>
<dbReference type="EMBL" id="AF397166">
    <property type="protein sequence ID" value="AAL04088.1"/>
    <property type="molecule type" value="Genomic_DNA"/>
</dbReference>
<dbReference type="EMBL" id="AE014133">
    <property type="protein sequence ID" value="AAN59540.1"/>
    <property type="molecule type" value="Genomic_DNA"/>
</dbReference>
<dbReference type="RefSeq" id="NP_722234.1">
    <property type="nucleotide sequence ID" value="NC_004350.2"/>
</dbReference>
<dbReference type="RefSeq" id="WP_002262126.1">
    <property type="nucleotide sequence ID" value="NC_004350.2"/>
</dbReference>
<dbReference type="STRING" id="210007.SMU_1929"/>
<dbReference type="GeneID" id="93858681"/>
<dbReference type="KEGG" id="smu:SMU_1929"/>
<dbReference type="PATRIC" id="fig|210007.7.peg.1715"/>
<dbReference type="eggNOG" id="COG0501">
    <property type="taxonomic scope" value="Bacteria"/>
</dbReference>
<dbReference type="HOGENOM" id="CLU_042266_2_1_9"/>
<dbReference type="OrthoDB" id="15218at2"/>
<dbReference type="PhylomeDB" id="Q93D93"/>
<dbReference type="Proteomes" id="UP000002512">
    <property type="component" value="Chromosome"/>
</dbReference>
<dbReference type="GO" id="GO:0005886">
    <property type="term" value="C:plasma membrane"/>
    <property type="evidence" value="ECO:0007669"/>
    <property type="project" value="UniProtKB-SubCell"/>
</dbReference>
<dbReference type="GO" id="GO:0004222">
    <property type="term" value="F:metalloendopeptidase activity"/>
    <property type="evidence" value="ECO:0007669"/>
    <property type="project" value="UniProtKB-UniRule"/>
</dbReference>
<dbReference type="GO" id="GO:0008270">
    <property type="term" value="F:zinc ion binding"/>
    <property type="evidence" value="ECO:0007669"/>
    <property type="project" value="UniProtKB-UniRule"/>
</dbReference>
<dbReference type="GO" id="GO:0006508">
    <property type="term" value="P:proteolysis"/>
    <property type="evidence" value="ECO:0007669"/>
    <property type="project" value="UniProtKB-KW"/>
</dbReference>
<dbReference type="CDD" id="cd07340">
    <property type="entry name" value="M48B_Htpx_like"/>
    <property type="match status" value="1"/>
</dbReference>
<dbReference type="Gene3D" id="3.30.2010.10">
    <property type="entry name" value="Metalloproteases ('zincins'), catalytic domain"/>
    <property type="match status" value="1"/>
</dbReference>
<dbReference type="HAMAP" id="MF_00188">
    <property type="entry name" value="Pept_M48_protease_HtpX"/>
    <property type="match status" value="1"/>
</dbReference>
<dbReference type="InterPro" id="IPR050083">
    <property type="entry name" value="HtpX_protease"/>
</dbReference>
<dbReference type="InterPro" id="IPR022919">
    <property type="entry name" value="Pept_M48_protease_HtpX"/>
</dbReference>
<dbReference type="InterPro" id="IPR001915">
    <property type="entry name" value="Peptidase_M48"/>
</dbReference>
<dbReference type="NCBIfam" id="NF003425">
    <property type="entry name" value="PRK04897.1"/>
    <property type="match status" value="1"/>
</dbReference>
<dbReference type="PANTHER" id="PTHR43221">
    <property type="entry name" value="PROTEASE HTPX"/>
    <property type="match status" value="1"/>
</dbReference>
<dbReference type="PANTHER" id="PTHR43221:SF1">
    <property type="entry name" value="PROTEASE HTPX"/>
    <property type="match status" value="1"/>
</dbReference>
<dbReference type="Pfam" id="PF01435">
    <property type="entry name" value="Peptidase_M48"/>
    <property type="match status" value="1"/>
</dbReference>
<keyword id="KW-1003">Cell membrane</keyword>
<keyword id="KW-0378">Hydrolase</keyword>
<keyword id="KW-0472">Membrane</keyword>
<keyword id="KW-0479">Metal-binding</keyword>
<keyword id="KW-0482">Metalloprotease</keyword>
<keyword id="KW-0645">Protease</keyword>
<keyword id="KW-1185">Reference proteome</keyword>
<keyword id="KW-0812">Transmembrane</keyword>
<keyword id="KW-1133">Transmembrane helix</keyword>
<keyword id="KW-0862">Zinc</keyword>
<evidence type="ECO:0000255" key="1">
    <source>
        <dbReference type="HAMAP-Rule" id="MF_00188"/>
    </source>
</evidence>
<organism>
    <name type="scientific">Streptococcus mutans serotype c (strain ATCC 700610 / UA159)</name>
    <dbReference type="NCBI Taxonomy" id="210007"/>
    <lineage>
        <taxon>Bacteria</taxon>
        <taxon>Bacillati</taxon>
        <taxon>Bacillota</taxon>
        <taxon>Bacilli</taxon>
        <taxon>Lactobacillales</taxon>
        <taxon>Streptococcaceae</taxon>
        <taxon>Streptococcus</taxon>
    </lineage>
</organism>
<accession>Q93D93</accession>
<sequence length="299" mass="32725">MLFNQIASNKRKTIVLLIVFFMLLAAIGAAVGYLWLDSLVGGMAIALIIGFIYAFSMIFQSTNIVMAMNNAKEITVDEMPDYYHIVEDMAMVAQIPMPRVYVIDDPSLNAFATGSSPQNAAVAATTGLLAIMNREELEGVIGHEVSHIRNYDIRISTIAVALASAVTLISSIGGRMMWFGGGRSRRSNDNEGGGYLQIILLIFSLLAIILAPLAASLVQLAISRQREYLADASSVELTRNPQGMIRALQKLEQSQPMAHSVDNASAALYINDPKKKSGLKHLFYTHPPIADRIRRLEQV</sequence>
<comment type="cofactor">
    <cofactor evidence="1">
        <name>Zn(2+)</name>
        <dbReference type="ChEBI" id="CHEBI:29105"/>
    </cofactor>
    <text evidence="1">Binds 1 zinc ion per subunit.</text>
</comment>
<comment type="subcellular location">
    <subcellularLocation>
        <location evidence="1">Cell membrane</location>
        <topology evidence="1">Multi-pass membrane protein</topology>
    </subcellularLocation>
</comment>
<comment type="similarity">
    <text evidence="1">Belongs to the peptidase M48B family.</text>
</comment>
<gene>
    <name evidence="1" type="primary">htpX</name>
    <name type="ordered locus">SMU_1929</name>
</gene>
<reference key="1">
    <citation type="submission" date="2001-07" db="EMBL/GenBank/DDBJ databases">
        <title>Novel sucrose-dependent adhesion cofactors (sdc) in Streptococcus mutans.</title>
        <authorList>
            <person name="Tao L."/>
            <person name="Tanzer J.M."/>
        </authorList>
    </citation>
    <scope>NUCLEOTIDE SEQUENCE [GENOMIC DNA]</scope>
    <source>
        <strain>LT11</strain>
    </source>
</reference>
<reference key="2">
    <citation type="journal article" date="2002" name="Proc. Natl. Acad. Sci. U.S.A.">
        <title>Genome sequence of Streptococcus mutans UA159, a cariogenic dental pathogen.</title>
        <authorList>
            <person name="Ajdic D.J."/>
            <person name="McShan W.M."/>
            <person name="McLaughlin R.E."/>
            <person name="Savic G."/>
            <person name="Chang J."/>
            <person name="Carson M.B."/>
            <person name="Primeaux C."/>
            <person name="Tian R."/>
            <person name="Kenton S."/>
            <person name="Jia H.G."/>
            <person name="Lin S.P."/>
            <person name="Qian Y."/>
            <person name="Li S."/>
            <person name="Zhu H."/>
            <person name="Najar F.Z."/>
            <person name="Lai H."/>
            <person name="White J."/>
            <person name="Roe B.A."/>
            <person name="Ferretti J.J."/>
        </authorList>
    </citation>
    <scope>NUCLEOTIDE SEQUENCE [LARGE SCALE GENOMIC DNA]</scope>
    <source>
        <strain>ATCC 700610 / UA159</strain>
    </source>
</reference>